<gene>
    <name type="primary">hisS</name>
    <name type="ordered locus">CA_C2740</name>
</gene>
<name>SYH_CLOAB</name>
<sequence>MNNKIKPSILPGFMELLPKEQLVFNDIVSKITGVYEQNGFLPMDTPIIEKEEVLLAKSAGETEKQVYRIDNEDRKQVLRFDLTVPFSRFAAQYMSDLTFPFKRYQLGKVYRGERNQKGRYREFYQCDVDVVGNGNLSIKNDAFIINMASKALRKIGLDSYKFQISNRKILTGVLEGLNITNMQEVMILIDKYDKITEEQFLSELNKLIGEEKAKVISKVIKISGSSDEVVENLKKVEIKNEMLEKGIEEVEEVIKYLKLFGVEDSEYAINLKIIRGLDYYTGTVFETLLTGNESYGSICSGGRYDNLAQNYTENVLPGVGMSIGITRLFFVLREIGFIENYNSSLNEKYLIVPIGDTFEYCTKILNKLLVNGKSAEIYFEEGKLKKKLTYANKLDIKYVILIGEDEVTNKELVIKDMITGEQKKLNIEEI</sequence>
<feature type="chain" id="PRO_0000136141" description="Histidine--tRNA ligase">
    <location>
        <begin position="1"/>
        <end position="430"/>
    </location>
</feature>
<dbReference type="EC" id="6.1.1.21"/>
<dbReference type="EMBL" id="AE001437">
    <property type="protein sequence ID" value="AAK80686.1"/>
    <property type="molecule type" value="Genomic_DNA"/>
</dbReference>
<dbReference type="PIR" id="C97237">
    <property type="entry name" value="C97237"/>
</dbReference>
<dbReference type="RefSeq" id="NP_349346.1">
    <property type="nucleotide sequence ID" value="NC_003030.1"/>
</dbReference>
<dbReference type="RefSeq" id="WP_010966027.1">
    <property type="nucleotide sequence ID" value="NC_003030.1"/>
</dbReference>
<dbReference type="SMR" id="Q97FJ7"/>
<dbReference type="STRING" id="272562.CA_C2740"/>
<dbReference type="DNASU" id="1118923"/>
<dbReference type="GeneID" id="44999228"/>
<dbReference type="KEGG" id="cac:CA_C2740"/>
<dbReference type="PATRIC" id="fig|272562.8.peg.2929"/>
<dbReference type="eggNOG" id="COG0124">
    <property type="taxonomic scope" value="Bacteria"/>
</dbReference>
<dbReference type="HOGENOM" id="CLU_025113_3_0_9"/>
<dbReference type="OrthoDB" id="9800814at2"/>
<dbReference type="Proteomes" id="UP000000814">
    <property type="component" value="Chromosome"/>
</dbReference>
<dbReference type="GO" id="GO:0005737">
    <property type="term" value="C:cytoplasm"/>
    <property type="evidence" value="ECO:0007669"/>
    <property type="project" value="UniProtKB-SubCell"/>
</dbReference>
<dbReference type="GO" id="GO:0005524">
    <property type="term" value="F:ATP binding"/>
    <property type="evidence" value="ECO:0007669"/>
    <property type="project" value="UniProtKB-UniRule"/>
</dbReference>
<dbReference type="GO" id="GO:0140096">
    <property type="term" value="F:catalytic activity, acting on a protein"/>
    <property type="evidence" value="ECO:0007669"/>
    <property type="project" value="UniProtKB-ARBA"/>
</dbReference>
<dbReference type="GO" id="GO:0004821">
    <property type="term" value="F:histidine-tRNA ligase activity"/>
    <property type="evidence" value="ECO:0007669"/>
    <property type="project" value="UniProtKB-UniRule"/>
</dbReference>
<dbReference type="GO" id="GO:0016740">
    <property type="term" value="F:transferase activity"/>
    <property type="evidence" value="ECO:0007669"/>
    <property type="project" value="UniProtKB-ARBA"/>
</dbReference>
<dbReference type="GO" id="GO:0006427">
    <property type="term" value="P:histidyl-tRNA aminoacylation"/>
    <property type="evidence" value="ECO:0007669"/>
    <property type="project" value="UniProtKB-UniRule"/>
</dbReference>
<dbReference type="CDD" id="cd00773">
    <property type="entry name" value="HisRS-like_core"/>
    <property type="match status" value="1"/>
</dbReference>
<dbReference type="Gene3D" id="3.40.50.800">
    <property type="entry name" value="Anticodon-binding domain"/>
    <property type="match status" value="1"/>
</dbReference>
<dbReference type="Gene3D" id="3.30.930.10">
    <property type="entry name" value="Bira Bifunctional Protein, Domain 2"/>
    <property type="match status" value="1"/>
</dbReference>
<dbReference type="HAMAP" id="MF_00127">
    <property type="entry name" value="His_tRNA_synth"/>
    <property type="match status" value="1"/>
</dbReference>
<dbReference type="InterPro" id="IPR006195">
    <property type="entry name" value="aa-tRNA-synth_II"/>
</dbReference>
<dbReference type="InterPro" id="IPR045864">
    <property type="entry name" value="aa-tRNA-synth_II/BPL/LPL"/>
</dbReference>
<dbReference type="InterPro" id="IPR004154">
    <property type="entry name" value="Anticodon-bd"/>
</dbReference>
<dbReference type="InterPro" id="IPR036621">
    <property type="entry name" value="Anticodon-bd_dom_sf"/>
</dbReference>
<dbReference type="InterPro" id="IPR015807">
    <property type="entry name" value="His-tRNA-ligase"/>
</dbReference>
<dbReference type="InterPro" id="IPR041715">
    <property type="entry name" value="HisRS-like_core"/>
</dbReference>
<dbReference type="InterPro" id="IPR004516">
    <property type="entry name" value="HisRS/HisZ"/>
</dbReference>
<dbReference type="NCBIfam" id="TIGR00442">
    <property type="entry name" value="hisS"/>
    <property type="match status" value="1"/>
</dbReference>
<dbReference type="PANTHER" id="PTHR11476:SF7">
    <property type="entry name" value="HISTIDINE--TRNA LIGASE"/>
    <property type="match status" value="1"/>
</dbReference>
<dbReference type="PANTHER" id="PTHR11476">
    <property type="entry name" value="HISTIDYL-TRNA SYNTHETASE"/>
    <property type="match status" value="1"/>
</dbReference>
<dbReference type="Pfam" id="PF03129">
    <property type="entry name" value="HGTP_anticodon"/>
    <property type="match status" value="1"/>
</dbReference>
<dbReference type="Pfam" id="PF13393">
    <property type="entry name" value="tRNA-synt_His"/>
    <property type="match status" value="1"/>
</dbReference>
<dbReference type="PIRSF" id="PIRSF001549">
    <property type="entry name" value="His-tRNA_synth"/>
    <property type="match status" value="1"/>
</dbReference>
<dbReference type="SUPFAM" id="SSF52954">
    <property type="entry name" value="Class II aaRS ABD-related"/>
    <property type="match status" value="1"/>
</dbReference>
<dbReference type="SUPFAM" id="SSF55681">
    <property type="entry name" value="Class II aaRS and biotin synthetases"/>
    <property type="match status" value="1"/>
</dbReference>
<dbReference type="PROSITE" id="PS50862">
    <property type="entry name" value="AA_TRNA_LIGASE_II"/>
    <property type="match status" value="1"/>
</dbReference>
<protein>
    <recommendedName>
        <fullName>Histidine--tRNA ligase</fullName>
        <ecNumber>6.1.1.21</ecNumber>
    </recommendedName>
    <alternativeName>
        <fullName>Histidyl-tRNA synthetase</fullName>
        <shortName>HisRS</shortName>
    </alternativeName>
</protein>
<reference key="1">
    <citation type="journal article" date="2001" name="J. Bacteriol.">
        <title>Genome sequence and comparative analysis of the solvent-producing bacterium Clostridium acetobutylicum.</title>
        <authorList>
            <person name="Noelling J."/>
            <person name="Breton G."/>
            <person name="Omelchenko M.V."/>
            <person name="Makarova K.S."/>
            <person name="Zeng Q."/>
            <person name="Gibson R."/>
            <person name="Lee H.M."/>
            <person name="Dubois J."/>
            <person name="Qiu D."/>
            <person name="Hitti J."/>
            <person name="Wolf Y.I."/>
            <person name="Tatusov R.L."/>
            <person name="Sabathe F."/>
            <person name="Doucette-Stamm L.A."/>
            <person name="Soucaille P."/>
            <person name="Daly M.J."/>
            <person name="Bennett G.N."/>
            <person name="Koonin E.V."/>
            <person name="Smith D.R."/>
        </authorList>
    </citation>
    <scope>NUCLEOTIDE SEQUENCE [LARGE SCALE GENOMIC DNA]</scope>
    <source>
        <strain>ATCC 824 / DSM 792 / JCM 1419 / IAM 19013 / LMG 5710 / NBRC 13948 / NRRL B-527 / VKM B-1787 / 2291 / W</strain>
    </source>
</reference>
<evidence type="ECO:0000250" key="1"/>
<evidence type="ECO:0000305" key="2"/>
<comment type="catalytic activity">
    <reaction>
        <text>tRNA(His) + L-histidine + ATP = L-histidyl-tRNA(His) + AMP + diphosphate + H(+)</text>
        <dbReference type="Rhea" id="RHEA:17313"/>
        <dbReference type="Rhea" id="RHEA-COMP:9665"/>
        <dbReference type="Rhea" id="RHEA-COMP:9689"/>
        <dbReference type="ChEBI" id="CHEBI:15378"/>
        <dbReference type="ChEBI" id="CHEBI:30616"/>
        <dbReference type="ChEBI" id="CHEBI:33019"/>
        <dbReference type="ChEBI" id="CHEBI:57595"/>
        <dbReference type="ChEBI" id="CHEBI:78442"/>
        <dbReference type="ChEBI" id="CHEBI:78527"/>
        <dbReference type="ChEBI" id="CHEBI:456215"/>
        <dbReference type="EC" id="6.1.1.21"/>
    </reaction>
</comment>
<comment type="subunit">
    <text evidence="1">Homodimer.</text>
</comment>
<comment type="subcellular location">
    <subcellularLocation>
        <location evidence="1">Cytoplasm</location>
    </subcellularLocation>
</comment>
<comment type="similarity">
    <text evidence="2">Belongs to the class-II aminoacyl-tRNA synthetase family.</text>
</comment>
<organism>
    <name type="scientific">Clostridium acetobutylicum (strain ATCC 824 / DSM 792 / JCM 1419 / IAM 19013 / LMG 5710 / NBRC 13948 / NRRL B-527 / VKM B-1787 / 2291 / W)</name>
    <dbReference type="NCBI Taxonomy" id="272562"/>
    <lineage>
        <taxon>Bacteria</taxon>
        <taxon>Bacillati</taxon>
        <taxon>Bacillota</taxon>
        <taxon>Clostridia</taxon>
        <taxon>Eubacteriales</taxon>
        <taxon>Clostridiaceae</taxon>
        <taxon>Clostridium</taxon>
    </lineage>
</organism>
<accession>Q97FJ7</accession>
<keyword id="KW-0030">Aminoacyl-tRNA synthetase</keyword>
<keyword id="KW-0067">ATP-binding</keyword>
<keyword id="KW-0963">Cytoplasm</keyword>
<keyword id="KW-0436">Ligase</keyword>
<keyword id="KW-0547">Nucleotide-binding</keyword>
<keyword id="KW-0648">Protein biosynthesis</keyword>
<keyword id="KW-1185">Reference proteome</keyword>
<proteinExistence type="inferred from homology"/>